<organism>
    <name type="scientific">Encephalitozoon cuniculi (strain GB-M1)</name>
    <name type="common">Microsporidian parasite</name>
    <dbReference type="NCBI Taxonomy" id="284813"/>
    <lineage>
        <taxon>Eukaryota</taxon>
        <taxon>Fungi</taxon>
        <taxon>Fungi incertae sedis</taxon>
        <taxon>Microsporidia</taxon>
        <taxon>Unikaryonidae</taxon>
        <taxon>Encephalitozoon</taxon>
    </lineage>
</organism>
<accession>Q8SQN2</accession>
<gene>
    <name type="primary">DYS1</name>
    <name type="ordered locus">ECU09_0910</name>
</gene>
<name>DHYS_ENCCU</name>
<evidence type="ECO:0000250" key="1"/>
<evidence type="ECO:0000305" key="2"/>
<keyword id="KW-0386">Hypusine biosynthesis</keyword>
<keyword id="KW-0520">NAD</keyword>
<keyword id="KW-1185">Reference proteome</keyword>
<keyword id="KW-0808">Transferase</keyword>
<feature type="chain" id="PRO_0000134483" description="Deoxyhypusine synthase">
    <location>
        <begin position="1"/>
        <end position="334"/>
    </location>
</feature>
<feature type="active site" description="Nucleophile" evidence="1">
    <location>
        <position position="297"/>
    </location>
</feature>
<feature type="binding site" evidence="1">
    <location>
        <begin position="73"/>
        <end position="77"/>
    </location>
    <ligand>
        <name>NAD(+)</name>
        <dbReference type="ChEBI" id="CHEBI:57540"/>
    </ligand>
</feature>
<feature type="binding site" evidence="1">
    <location>
        <begin position="99"/>
        <end position="101"/>
    </location>
    <ligand>
        <name>NAD(+)</name>
        <dbReference type="ChEBI" id="CHEBI:57540"/>
    </ligand>
</feature>
<feature type="binding site" evidence="1">
    <location>
        <begin position="104"/>
        <end position="105"/>
    </location>
    <ligand>
        <name>spermidine</name>
        <dbReference type="ChEBI" id="CHEBI:57834"/>
    </ligand>
</feature>
<feature type="binding site" evidence="1">
    <location>
        <position position="105"/>
    </location>
    <ligand>
        <name>NAD(+)</name>
        <dbReference type="ChEBI" id="CHEBI:57540"/>
    </ligand>
</feature>
<feature type="binding site" evidence="1">
    <location>
        <position position="207"/>
    </location>
    <ligand>
        <name>NAD(+)</name>
        <dbReference type="ChEBI" id="CHEBI:57540"/>
    </ligand>
</feature>
<feature type="binding site" evidence="1">
    <location>
        <position position="212"/>
    </location>
    <ligand>
        <name>spermidine</name>
        <dbReference type="ChEBI" id="CHEBI:57834"/>
    </ligand>
</feature>
<feature type="binding site" evidence="1">
    <location>
        <position position="256"/>
    </location>
    <ligand>
        <name>spermidine</name>
        <dbReference type="ChEBI" id="CHEBI:57834"/>
    </ligand>
</feature>
<feature type="binding site" evidence="1">
    <location>
        <begin position="276"/>
        <end position="277"/>
    </location>
    <ligand>
        <name>NAD(+)</name>
        <dbReference type="ChEBI" id="CHEBI:57540"/>
    </ligand>
</feature>
<feature type="binding site" evidence="1">
    <location>
        <begin position="282"/>
        <end position="284"/>
    </location>
    <ligand>
        <name>spermidine</name>
        <dbReference type="ChEBI" id="CHEBI:57834"/>
    </ligand>
</feature>
<feature type="binding site" evidence="1">
    <location>
        <begin position="291"/>
        <end position="297"/>
    </location>
    <ligand>
        <name>spermidine</name>
        <dbReference type="ChEBI" id="CHEBI:57834"/>
    </ligand>
</feature>
<feature type="binding site" evidence="1">
    <location>
        <begin position="310"/>
        <end position="311"/>
    </location>
    <ligand>
        <name>NAD(+)</name>
        <dbReference type="ChEBI" id="CHEBI:57540"/>
    </ligand>
</feature>
<comment type="function">
    <text evidence="1">Catalyzes the NAD-dependent oxidative cleavage of spermidine and the subsequent transfer of the butylamine moiety of spermidine to the epsilon-amino group of a specific lysine residue of the eIF-5A precursor protein to form the intermediate deoxyhypusine residue.</text>
</comment>
<comment type="catalytic activity">
    <reaction>
        <text>[eIF5A protein]-L-lysine + spermidine = [eIF5A protein]-deoxyhypusine + propane-1,3-diamine</text>
        <dbReference type="Rhea" id="RHEA:33299"/>
        <dbReference type="Rhea" id="RHEA-COMP:10143"/>
        <dbReference type="Rhea" id="RHEA-COMP:10144"/>
        <dbReference type="ChEBI" id="CHEBI:29969"/>
        <dbReference type="ChEBI" id="CHEBI:57484"/>
        <dbReference type="ChEBI" id="CHEBI:57834"/>
        <dbReference type="ChEBI" id="CHEBI:82657"/>
        <dbReference type="EC" id="2.5.1.46"/>
    </reaction>
</comment>
<comment type="cofactor">
    <cofactor evidence="1">
        <name>NAD(+)</name>
        <dbReference type="ChEBI" id="CHEBI:57540"/>
    </cofactor>
</comment>
<comment type="pathway">
    <text>Protein modification; eIF5A hypusination.</text>
</comment>
<comment type="similarity">
    <text evidence="2">Belongs to the deoxyhypusine synthase family.</text>
</comment>
<protein>
    <recommendedName>
        <fullName>Deoxyhypusine synthase</fullName>
        <shortName>DHS</shortName>
        <ecNumber>2.5.1.46</ecNumber>
    </recommendedName>
</protein>
<proteinExistence type="inferred from homology"/>
<dbReference type="EC" id="2.5.1.46"/>
<dbReference type="EMBL" id="AL590451">
    <property type="protein sequence ID" value="CAD27064.2"/>
    <property type="molecule type" value="Genomic_DNA"/>
</dbReference>
<dbReference type="RefSeq" id="XP_955645.1">
    <property type="nucleotide sequence ID" value="XM_950552.1"/>
</dbReference>
<dbReference type="SMR" id="Q8SQN2"/>
<dbReference type="FunCoup" id="Q8SQN2">
    <property type="interactions" value="179"/>
</dbReference>
<dbReference type="STRING" id="284813.Q8SQN2"/>
<dbReference type="VEuPathDB" id="MicrosporidiaDB:ECU09_0910"/>
<dbReference type="HOGENOM" id="CLU_039781_0_0_1"/>
<dbReference type="InParanoid" id="Q8SQN2"/>
<dbReference type="OrthoDB" id="294378at2759"/>
<dbReference type="UniPathway" id="UPA00354"/>
<dbReference type="Proteomes" id="UP000000819">
    <property type="component" value="Chromosome IX"/>
</dbReference>
<dbReference type="GO" id="GO:0005737">
    <property type="term" value="C:cytoplasm"/>
    <property type="evidence" value="ECO:0007669"/>
    <property type="project" value="TreeGrafter"/>
</dbReference>
<dbReference type="GO" id="GO:0034038">
    <property type="term" value="F:deoxyhypusine synthase activity"/>
    <property type="evidence" value="ECO:0007669"/>
    <property type="project" value="UniProtKB-EC"/>
</dbReference>
<dbReference type="FunFam" id="3.40.910.10:FF:000010">
    <property type="entry name" value="Deoxyhypusine synthase"/>
    <property type="match status" value="1"/>
</dbReference>
<dbReference type="Gene3D" id="3.40.910.10">
    <property type="entry name" value="Deoxyhypusine synthase"/>
    <property type="match status" value="1"/>
</dbReference>
<dbReference type="InterPro" id="IPR002773">
    <property type="entry name" value="Deoxyhypusine_synthase"/>
</dbReference>
<dbReference type="InterPro" id="IPR036982">
    <property type="entry name" value="Deoxyhypusine_synthase_sf"/>
</dbReference>
<dbReference type="InterPro" id="IPR029035">
    <property type="entry name" value="DHS-like_NAD/FAD-binding_dom"/>
</dbReference>
<dbReference type="NCBIfam" id="TIGR00321">
    <property type="entry name" value="dhys"/>
    <property type="match status" value="1"/>
</dbReference>
<dbReference type="PANTHER" id="PTHR11703">
    <property type="entry name" value="DEOXYHYPUSINE SYNTHASE"/>
    <property type="match status" value="1"/>
</dbReference>
<dbReference type="PANTHER" id="PTHR11703:SF0">
    <property type="entry name" value="DEOXYHYPUSINE SYNTHASE"/>
    <property type="match status" value="1"/>
</dbReference>
<dbReference type="Pfam" id="PF01916">
    <property type="entry name" value="DS"/>
    <property type="match status" value="1"/>
</dbReference>
<dbReference type="SUPFAM" id="SSF52467">
    <property type="entry name" value="DHS-like NAD/FAD-binding domain"/>
    <property type="match status" value="1"/>
</dbReference>
<sequence>MDRPQNVKDLARKVKDNLSFSREVRGMDFEKEWDFMAIMRSFETMGFQGSNLYRAVEEIERMKNSKIFFGCTSNIISSGLRDVIATLVKRRHVHVLVITGGGIEEDIIKAFKPTFCADFRLDGAELRDNGLNRIGNLVIPSENYEHLESWLNNIVNDITEGYTAERPRILTPSSFIRILGERIDDESSILYWAAKNDIPVYSPAVVDGSLGDILSFHPRRKMLKLDIVEDVYRINCETIFCGETAAIILGCGVVKHHILNANLFKNGLEHCVLINNAQEFDGSDAGASLDEAVSWGKVKPGTRGVKVFGDATILFPLLVGATFMRKDKDVPKGE</sequence>
<reference key="1">
    <citation type="journal article" date="2001" name="Nature">
        <title>Genome sequence and gene compaction of the eukaryote parasite Encephalitozoon cuniculi.</title>
        <authorList>
            <person name="Katinka M.D."/>
            <person name="Duprat S."/>
            <person name="Cornillot E."/>
            <person name="Metenier G."/>
            <person name="Thomarat F."/>
            <person name="Prensier G."/>
            <person name="Barbe V."/>
            <person name="Peyretaillade E."/>
            <person name="Brottier P."/>
            <person name="Wincker P."/>
            <person name="Delbac F."/>
            <person name="El Alaoui H."/>
            <person name="Peyret P."/>
            <person name="Saurin W."/>
            <person name="Gouy M."/>
            <person name="Weissenbach J."/>
            <person name="Vivares C.P."/>
        </authorList>
    </citation>
    <scope>NUCLEOTIDE SEQUENCE [LARGE SCALE GENOMIC DNA]</scope>
    <source>
        <strain>GB-M1</strain>
    </source>
</reference>
<reference key="2">
    <citation type="journal article" date="2009" name="BMC Genomics">
        <title>Identification of transcriptional signals in Encephalitozoon cuniculi widespread among Microsporidia phylum: support for accurate structural genome annotation.</title>
        <authorList>
            <person name="Peyretaillade E."/>
            <person name="Goncalves O."/>
            <person name="Terrat S."/>
            <person name="Dugat-Bony E."/>
            <person name="Wincker P."/>
            <person name="Cornman R.S."/>
            <person name="Evans J.D."/>
            <person name="Delbac F."/>
            <person name="Peyret P."/>
        </authorList>
    </citation>
    <scope>GENOME REANNOTATION</scope>
    <source>
        <strain>GB-M1</strain>
    </source>
</reference>